<protein>
    <recommendedName>
        <fullName evidence="1">Endoribonuclease YbeY</fullName>
        <ecNumber evidence="1">3.1.-.-</ecNumber>
    </recommendedName>
</protein>
<keyword id="KW-0963">Cytoplasm</keyword>
<keyword id="KW-0255">Endonuclease</keyword>
<keyword id="KW-0378">Hydrolase</keyword>
<keyword id="KW-0479">Metal-binding</keyword>
<keyword id="KW-0540">Nuclease</keyword>
<keyword id="KW-0690">Ribosome biogenesis</keyword>
<keyword id="KW-0698">rRNA processing</keyword>
<keyword id="KW-0862">Zinc</keyword>
<accession>B9L985</accession>
<reference key="1">
    <citation type="journal article" date="2009" name="PLoS Genet.">
        <title>Adaptations to submarine hydrothermal environments exemplified by the genome of Nautilia profundicola.</title>
        <authorList>
            <person name="Campbell B.J."/>
            <person name="Smith J.L."/>
            <person name="Hanson T.E."/>
            <person name="Klotz M.G."/>
            <person name="Stein L.Y."/>
            <person name="Lee C.K."/>
            <person name="Wu D."/>
            <person name="Robinson J.M."/>
            <person name="Khouri H.M."/>
            <person name="Eisen J.A."/>
            <person name="Cary S.C."/>
        </authorList>
    </citation>
    <scope>NUCLEOTIDE SEQUENCE [LARGE SCALE GENOMIC DNA]</scope>
    <source>
        <strain>ATCC BAA-1463 / DSM 18972 / AmH</strain>
    </source>
</reference>
<name>YBEY_NAUPA</name>
<comment type="function">
    <text evidence="1">Single strand-specific metallo-endoribonuclease involved in late-stage 70S ribosome quality control and in maturation of the 3' terminus of the 16S rRNA.</text>
</comment>
<comment type="cofactor">
    <cofactor evidence="1">
        <name>Zn(2+)</name>
        <dbReference type="ChEBI" id="CHEBI:29105"/>
    </cofactor>
    <text evidence="1">Binds 1 zinc ion.</text>
</comment>
<comment type="subcellular location">
    <subcellularLocation>
        <location evidence="1">Cytoplasm</location>
    </subcellularLocation>
</comment>
<comment type="similarity">
    <text evidence="1">Belongs to the endoribonuclease YbeY family.</text>
</comment>
<organism>
    <name type="scientific">Nautilia profundicola (strain ATCC BAA-1463 / DSM 18972 / AmH)</name>
    <dbReference type="NCBI Taxonomy" id="598659"/>
    <lineage>
        <taxon>Bacteria</taxon>
        <taxon>Pseudomonadati</taxon>
        <taxon>Campylobacterota</taxon>
        <taxon>Epsilonproteobacteria</taxon>
        <taxon>Nautiliales</taxon>
        <taxon>Nautiliaceae</taxon>
        <taxon>Nautilia</taxon>
    </lineage>
</organism>
<sequence>MIDFDNRTDYEFDINKLNDIYNLLTDKDIELILTDDEEIKELNSQFRNKDKATDVLSFPLEAMPGMPLGSIVISIDTAKKGAEEFGHSVDDEIRLLFLHGLLHLLGYDHETDNGEMRAKEEEIIKKLNLPSSLIVRNED</sequence>
<evidence type="ECO:0000255" key="1">
    <source>
        <dbReference type="HAMAP-Rule" id="MF_00009"/>
    </source>
</evidence>
<gene>
    <name evidence="1" type="primary">ybeY</name>
    <name type="ordered locus">NAMH_0789</name>
</gene>
<feature type="chain" id="PRO_1000199985" description="Endoribonuclease YbeY">
    <location>
        <begin position="1"/>
        <end position="139"/>
    </location>
</feature>
<feature type="binding site" evidence="1">
    <location>
        <position position="99"/>
    </location>
    <ligand>
        <name>Zn(2+)</name>
        <dbReference type="ChEBI" id="CHEBI:29105"/>
        <note>catalytic</note>
    </ligand>
</feature>
<feature type="binding site" evidence="1">
    <location>
        <position position="103"/>
    </location>
    <ligand>
        <name>Zn(2+)</name>
        <dbReference type="ChEBI" id="CHEBI:29105"/>
        <note>catalytic</note>
    </ligand>
</feature>
<feature type="binding site" evidence="1">
    <location>
        <position position="109"/>
    </location>
    <ligand>
        <name>Zn(2+)</name>
        <dbReference type="ChEBI" id="CHEBI:29105"/>
        <note>catalytic</note>
    </ligand>
</feature>
<proteinExistence type="inferred from homology"/>
<dbReference type="EC" id="3.1.-.-" evidence="1"/>
<dbReference type="EMBL" id="CP001279">
    <property type="protein sequence ID" value="ACM93548.1"/>
    <property type="molecule type" value="Genomic_DNA"/>
</dbReference>
<dbReference type="RefSeq" id="WP_015902600.1">
    <property type="nucleotide sequence ID" value="NC_012115.1"/>
</dbReference>
<dbReference type="SMR" id="B9L985"/>
<dbReference type="STRING" id="598659.NAMH_0789"/>
<dbReference type="KEGG" id="nam:NAMH_0789"/>
<dbReference type="eggNOG" id="COG0319">
    <property type="taxonomic scope" value="Bacteria"/>
</dbReference>
<dbReference type="HOGENOM" id="CLU_106710_3_0_7"/>
<dbReference type="OrthoDB" id="9807740at2"/>
<dbReference type="Proteomes" id="UP000000448">
    <property type="component" value="Chromosome"/>
</dbReference>
<dbReference type="GO" id="GO:0005737">
    <property type="term" value="C:cytoplasm"/>
    <property type="evidence" value="ECO:0007669"/>
    <property type="project" value="UniProtKB-SubCell"/>
</dbReference>
<dbReference type="GO" id="GO:0004222">
    <property type="term" value="F:metalloendopeptidase activity"/>
    <property type="evidence" value="ECO:0007669"/>
    <property type="project" value="InterPro"/>
</dbReference>
<dbReference type="GO" id="GO:0004521">
    <property type="term" value="F:RNA endonuclease activity"/>
    <property type="evidence" value="ECO:0007669"/>
    <property type="project" value="UniProtKB-UniRule"/>
</dbReference>
<dbReference type="GO" id="GO:0008270">
    <property type="term" value="F:zinc ion binding"/>
    <property type="evidence" value="ECO:0007669"/>
    <property type="project" value="UniProtKB-UniRule"/>
</dbReference>
<dbReference type="GO" id="GO:0006364">
    <property type="term" value="P:rRNA processing"/>
    <property type="evidence" value="ECO:0007669"/>
    <property type="project" value="UniProtKB-UniRule"/>
</dbReference>
<dbReference type="Gene3D" id="3.40.390.30">
    <property type="entry name" value="Metalloproteases ('zincins'), catalytic domain"/>
    <property type="match status" value="1"/>
</dbReference>
<dbReference type="HAMAP" id="MF_00009">
    <property type="entry name" value="Endoribonucl_YbeY"/>
    <property type="match status" value="1"/>
</dbReference>
<dbReference type="InterPro" id="IPR023091">
    <property type="entry name" value="MetalPrtase_cat_dom_sf_prd"/>
</dbReference>
<dbReference type="InterPro" id="IPR002036">
    <property type="entry name" value="YbeY"/>
</dbReference>
<dbReference type="InterPro" id="IPR020549">
    <property type="entry name" value="YbeY_CS"/>
</dbReference>
<dbReference type="NCBIfam" id="TIGR00043">
    <property type="entry name" value="rRNA maturation RNase YbeY"/>
    <property type="match status" value="1"/>
</dbReference>
<dbReference type="PANTHER" id="PTHR46986">
    <property type="entry name" value="ENDORIBONUCLEASE YBEY, CHLOROPLASTIC"/>
    <property type="match status" value="1"/>
</dbReference>
<dbReference type="PANTHER" id="PTHR46986:SF1">
    <property type="entry name" value="ENDORIBONUCLEASE YBEY, CHLOROPLASTIC"/>
    <property type="match status" value="1"/>
</dbReference>
<dbReference type="Pfam" id="PF02130">
    <property type="entry name" value="YbeY"/>
    <property type="match status" value="1"/>
</dbReference>
<dbReference type="SUPFAM" id="SSF55486">
    <property type="entry name" value="Metalloproteases ('zincins'), catalytic domain"/>
    <property type="match status" value="1"/>
</dbReference>
<dbReference type="PROSITE" id="PS01306">
    <property type="entry name" value="UPF0054"/>
    <property type="match status" value="1"/>
</dbReference>